<keyword id="KW-0963">Cytoplasm</keyword>
<keyword id="KW-0808">Transferase</keyword>
<name>GLPE_VIBA3</name>
<gene>
    <name evidence="1" type="primary">glpE</name>
    <name type="ordered locus">VS_3017</name>
</gene>
<dbReference type="EC" id="2.8.1.1" evidence="1"/>
<dbReference type="EMBL" id="FM954972">
    <property type="protein sequence ID" value="CAV20294.1"/>
    <property type="molecule type" value="Genomic_DNA"/>
</dbReference>
<dbReference type="SMR" id="B7VMA4"/>
<dbReference type="STRING" id="575788.VS_3017"/>
<dbReference type="KEGG" id="vsp:VS_3017"/>
<dbReference type="PATRIC" id="fig|575788.5.peg.4206"/>
<dbReference type="eggNOG" id="COG0607">
    <property type="taxonomic scope" value="Bacteria"/>
</dbReference>
<dbReference type="HOGENOM" id="CLU_089574_14_0_6"/>
<dbReference type="Proteomes" id="UP000009100">
    <property type="component" value="Chromosome 1"/>
</dbReference>
<dbReference type="GO" id="GO:0005737">
    <property type="term" value="C:cytoplasm"/>
    <property type="evidence" value="ECO:0007669"/>
    <property type="project" value="UniProtKB-SubCell"/>
</dbReference>
<dbReference type="GO" id="GO:0004792">
    <property type="term" value="F:thiosulfate-cyanide sulfurtransferase activity"/>
    <property type="evidence" value="ECO:0007669"/>
    <property type="project" value="UniProtKB-UniRule"/>
</dbReference>
<dbReference type="GO" id="GO:0006071">
    <property type="term" value="P:glycerol metabolic process"/>
    <property type="evidence" value="ECO:0007669"/>
    <property type="project" value="UniProtKB-UniRule"/>
</dbReference>
<dbReference type="CDD" id="cd01444">
    <property type="entry name" value="GlpE_ST"/>
    <property type="match status" value="1"/>
</dbReference>
<dbReference type="Gene3D" id="3.40.250.10">
    <property type="entry name" value="Rhodanese-like domain"/>
    <property type="match status" value="1"/>
</dbReference>
<dbReference type="HAMAP" id="MF_01009">
    <property type="entry name" value="Thiosulf_sulfurtr"/>
    <property type="match status" value="1"/>
</dbReference>
<dbReference type="InterPro" id="IPR050229">
    <property type="entry name" value="GlpE_sulfurtransferase"/>
</dbReference>
<dbReference type="InterPro" id="IPR001763">
    <property type="entry name" value="Rhodanese-like_dom"/>
</dbReference>
<dbReference type="InterPro" id="IPR036873">
    <property type="entry name" value="Rhodanese-like_dom_sf"/>
</dbReference>
<dbReference type="InterPro" id="IPR023695">
    <property type="entry name" value="Thiosulf_sulfurTrfase"/>
</dbReference>
<dbReference type="NCBIfam" id="NF001195">
    <property type="entry name" value="PRK00162.1"/>
    <property type="match status" value="1"/>
</dbReference>
<dbReference type="PANTHER" id="PTHR43031">
    <property type="entry name" value="FAD-DEPENDENT OXIDOREDUCTASE"/>
    <property type="match status" value="1"/>
</dbReference>
<dbReference type="PANTHER" id="PTHR43031:SF6">
    <property type="entry name" value="THIOSULFATE SULFURTRANSFERASE GLPE"/>
    <property type="match status" value="1"/>
</dbReference>
<dbReference type="Pfam" id="PF00581">
    <property type="entry name" value="Rhodanese"/>
    <property type="match status" value="1"/>
</dbReference>
<dbReference type="SMART" id="SM00450">
    <property type="entry name" value="RHOD"/>
    <property type="match status" value="1"/>
</dbReference>
<dbReference type="SUPFAM" id="SSF52821">
    <property type="entry name" value="Rhodanese/Cell cycle control phosphatase"/>
    <property type="match status" value="1"/>
</dbReference>
<dbReference type="PROSITE" id="PS50206">
    <property type="entry name" value="RHODANESE_3"/>
    <property type="match status" value="1"/>
</dbReference>
<organism>
    <name type="scientific">Vibrio atlanticus (strain LGP32)</name>
    <name type="common">Vibrio splendidus (strain Mel32)</name>
    <dbReference type="NCBI Taxonomy" id="575788"/>
    <lineage>
        <taxon>Bacteria</taxon>
        <taxon>Pseudomonadati</taxon>
        <taxon>Pseudomonadota</taxon>
        <taxon>Gammaproteobacteria</taxon>
        <taxon>Vibrionales</taxon>
        <taxon>Vibrionaceae</taxon>
        <taxon>Vibrio</taxon>
    </lineage>
</organism>
<proteinExistence type="inferred from homology"/>
<comment type="function">
    <text evidence="1">Transferase that catalyzes the transfer of sulfur from thiosulfate to thiophilic acceptors such as cyanide or dithiols. May function in a CysM-independent thiosulfate assimilation pathway by catalyzing the conversion of thiosulfate to sulfite, which can then be used for L-cysteine biosynthesis.</text>
</comment>
<comment type="catalytic activity">
    <reaction evidence="1">
        <text>thiosulfate + hydrogen cyanide = thiocyanate + sulfite + 2 H(+)</text>
        <dbReference type="Rhea" id="RHEA:16881"/>
        <dbReference type="ChEBI" id="CHEBI:15378"/>
        <dbReference type="ChEBI" id="CHEBI:17359"/>
        <dbReference type="ChEBI" id="CHEBI:18022"/>
        <dbReference type="ChEBI" id="CHEBI:18407"/>
        <dbReference type="ChEBI" id="CHEBI:33542"/>
        <dbReference type="EC" id="2.8.1.1"/>
    </reaction>
</comment>
<comment type="catalytic activity">
    <reaction evidence="1">
        <text>thiosulfate + [thioredoxin]-dithiol = [thioredoxin]-disulfide + hydrogen sulfide + sulfite + 2 H(+)</text>
        <dbReference type="Rhea" id="RHEA:83859"/>
        <dbReference type="Rhea" id="RHEA-COMP:10698"/>
        <dbReference type="Rhea" id="RHEA-COMP:10700"/>
        <dbReference type="ChEBI" id="CHEBI:15378"/>
        <dbReference type="ChEBI" id="CHEBI:17359"/>
        <dbReference type="ChEBI" id="CHEBI:29919"/>
        <dbReference type="ChEBI" id="CHEBI:29950"/>
        <dbReference type="ChEBI" id="CHEBI:33542"/>
        <dbReference type="ChEBI" id="CHEBI:50058"/>
    </reaction>
</comment>
<comment type="subcellular location">
    <subcellularLocation>
        <location evidence="1">Cytoplasm</location>
    </subcellularLocation>
</comment>
<comment type="similarity">
    <text evidence="1">Belongs to the GlpE family.</text>
</comment>
<protein>
    <recommendedName>
        <fullName evidence="1">Thiosulfate sulfurtransferase GlpE</fullName>
        <ecNumber evidence="1">2.8.1.1</ecNumber>
    </recommendedName>
</protein>
<reference key="1">
    <citation type="submission" date="2009-02" db="EMBL/GenBank/DDBJ databases">
        <title>Vibrio splendidus str. LGP32 complete genome.</title>
        <authorList>
            <person name="Mazel D."/>
            <person name="Le Roux F."/>
        </authorList>
    </citation>
    <scope>NUCLEOTIDE SEQUENCE [LARGE SCALE GENOMIC DNA]</scope>
    <source>
        <strain>LGP32</strain>
    </source>
</reference>
<accession>B7VMA4</accession>
<sequence length="106" mass="11817">MDQFKHIDVKGAQALIEQNEARLVDIRDPQSFAVAHSETAYHLTNDTMVSFMDEVEFEQPILVMCYHGISSQGAAQYLVNQGFEEVYSVDGGFEASYRAELPVIAG</sequence>
<feature type="chain" id="PRO_1000148877" description="Thiosulfate sulfurtransferase GlpE">
    <location>
        <begin position="1"/>
        <end position="106"/>
    </location>
</feature>
<feature type="domain" description="Rhodanese" evidence="1">
    <location>
        <begin position="17"/>
        <end position="105"/>
    </location>
</feature>
<feature type="active site" description="Cysteine persulfide intermediate" evidence="1">
    <location>
        <position position="65"/>
    </location>
</feature>
<evidence type="ECO:0000255" key="1">
    <source>
        <dbReference type="HAMAP-Rule" id="MF_01009"/>
    </source>
</evidence>